<keyword id="KW-0025">Alternative splicing</keyword>
<keyword id="KW-1003">Cell membrane</keyword>
<keyword id="KW-0966">Cell projection</keyword>
<keyword id="KW-0969">Cilium</keyword>
<keyword id="KW-0256">Endoplasmic reticulum</keyword>
<keyword id="KW-0282">Flagellum</keyword>
<keyword id="KW-0325">Glycoprotein</keyword>
<keyword id="KW-0472">Membrane</keyword>
<keyword id="KW-1185">Reference proteome</keyword>
<keyword id="KW-0812">Transmembrane</keyword>
<keyword id="KW-1133">Transmembrane helix</keyword>
<comment type="function">
    <text evidence="5 6">May play a role in sperm development or sperm function (PubMed:17904097). However, does not appear to have an essential role in spermatogenesis or male fertility (PubMed:34493359).</text>
</comment>
<comment type="subcellular location">
    <subcellularLocation>
        <location evidence="5">Cell projection</location>
        <location evidence="5">Cilium</location>
        <location evidence="5">Flagellum membrane</location>
        <topology evidence="2">Multi-pass membrane protein</topology>
    </subcellularLocation>
    <subcellularLocation>
        <location evidence="1">Endoplasmic reticulum membrane</location>
        <topology evidence="2">Multi-pass membrane protein</topology>
    </subcellularLocation>
    <text evidence="5">Localizes to the midpiece of the sperm tail.</text>
</comment>
<comment type="alternative products">
    <event type="alternative splicing"/>
    <isoform>
        <id>Q0EEE2-1</id>
        <name>1</name>
        <name>Ptchd3b</name>
        <sequence type="displayed"/>
    </isoform>
    <isoform>
        <id>Q0EEE2-2</id>
        <name>2</name>
        <name>Ptchd3a</name>
        <sequence type="described" ref="VSP_029100 VSP_029101"/>
    </isoform>
</comment>
<comment type="tissue specificity">
    <text evidence="5">Expressed in germ cells of the testis (at protein level).</text>
</comment>
<comment type="developmental stage">
    <text evidence="5">Expression begins around the pachytene stage of spermatogenesis.</text>
</comment>
<comment type="similarity">
    <text evidence="8">Belongs to the patched family.</text>
</comment>
<sequence length="906" mass="101813">MISSKVAPGEEEQGESPSKVELGEAEEQREAPLEGQLEAVPLDEAGPSWTTGPPLERLPPLGQEAPPPRRCHTNCLEAPLSRGFQRFGATVGANPWLFLLGPALLTASLGTGLIFLPKEKENLEEQYTPIGSPAKAERRFVQGHFSTNDTYRFSASRTSSETNFASILVVSLANSLLEPEIFKEVSKLDQAVQALKVVQENGTQILYQEVCAKYKTLCVPPNPLLFSWQHNSSLNLSDLTFPIHNTPTQLIYLAGFFGGNVLGQMTGKSQRLVESRAMRLLYYLKTEDPEDSERSQAWLTHFLDHFNDMKSSLTLEEIEVVYFSSLSRQLEFEATSKTVIPLFHLAYILIILFAVVSCSRLDCIRNKMCVAVFGVFSVAMSVVSGFGLMLHLGVPFVIIVANSPFLILGVGVDDMFIMISAWQKTSLSESIRERLSNSYSKVAVSITITTITNVLAFYTGITSSFRSVQYFCIYTGTTLLFCYFYSITCFGAVMALDGKREVAWSRWLEKPDQKYSSLKKSCCVPFGSLIDKHGEDNHPMNLFFRDYFGPFLTTSKAKFIVVLLYIFYIISSIYGCFQVQEGLDLRNLASDDSYITPYFNVEEDYFSDYGPRVMVIVTESVNYWDNDVRQKLDKCMTQFEENEYVDKNLTEFWLEAYMQYMNSSGNNPNDKNTFMNNIAGFLQFFPIFTYDINISSSNEITSSRGFIQIVDVSSSSNKKRMLLKLRSIAENCEVPLMVYNQAFIYFDQYAAIIENTVRNVMIASTAMFIVSLLLIPHPVCSLWVTFAIASVIVGVTGFMAFWNVNLDSISMINLVICIGFSFDFSAHISYAFVSSTEPSVNKKSIEALYLLGYPVLQSAISTIIGVCVLSAAKAYIFRTFFKIMFLVMFFGAAHGLIFIPVFLTFF</sequence>
<dbReference type="EMBL" id="AB235902">
    <property type="protein sequence ID" value="BAF32146.1"/>
    <property type="molecule type" value="mRNA"/>
</dbReference>
<dbReference type="EMBL" id="AK015440">
    <property type="protein sequence ID" value="BAB29848.1"/>
    <property type="molecule type" value="mRNA"/>
</dbReference>
<dbReference type="EMBL" id="AK017136">
    <property type="protein sequence ID" value="BAB30614.1"/>
    <property type="molecule type" value="mRNA"/>
</dbReference>
<dbReference type="EMBL" id="AL663041">
    <property type="status" value="NOT_ANNOTATED_CDS"/>
    <property type="molecule type" value="Genomic_DNA"/>
</dbReference>
<dbReference type="CCDS" id="CCDS49014.1">
    <molecule id="Q0EEE2-1"/>
</dbReference>
<dbReference type="RefSeq" id="NP_083325.1">
    <molecule id="Q0EEE2-1"/>
    <property type="nucleotide sequence ID" value="NM_029049.2"/>
</dbReference>
<dbReference type="SMR" id="Q0EEE2"/>
<dbReference type="FunCoup" id="Q0EEE2">
    <property type="interactions" value="35"/>
</dbReference>
<dbReference type="STRING" id="10090.ENSMUSP00000035709"/>
<dbReference type="GlyCosmos" id="Q0EEE2">
    <property type="glycosylation" value="2 sites, No reported glycans"/>
</dbReference>
<dbReference type="GlyGen" id="Q0EEE2">
    <property type="glycosylation" value="2 sites"/>
</dbReference>
<dbReference type="iPTMnet" id="Q0EEE2"/>
<dbReference type="PhosphoSitePlus" id="Q0EEE2"/>
<dbReference type="SwissPalm" id="Q0EEE2"/>
<dbReference type="PaxDb" id="10090-ENSMUSP00000035709"/>
<dbReference type="ProteomicsDB" id="291625">
    <molecule id="Q0EEE2-1"/>
</dbReference>
<dbReference type="ProteomicsDB" id="291626">
    <molecule id="Q0EEE2-2"/>
</dbReference>
<dbReference type="Ensembl" id="ENSMUST00000036690.7">
    <molecule id="Q0EEE2-1"/>
    <property type="protein sequence ID" value="ENSMUSP00000035709.7"/>
    <property type="gene ID" value="ENSMUSG00000039198.9"/>
</dbReference>
<dbReference type="GeneID" id="74675"/>
<dbReference type="KEGG" id="mmu:74675"/>
<dbReference type="UCSC" id="uc007mwf.2">
    <molecule id="Q0EEE2-1"/>
    <property type="organism name" value="mouse"/>
</dbReference>
<dbReference type="AGR" id="MGI:1921925"/>
<dbReference type="CTD" id="374308"/>
<dbReference type="MGI" id="MGI:1921925">
    <property type="gene designation" value="Ptchd3"/>
</dbReference>
<dbReference type="VEuPathDB" id="HostDB:ENSMUSG00000039198"/>
<dbReference type="eggNOG" id="KOG1935">
    <property type="taxonomic scope" value="Eukaryota"/>
</dbReference>
<dbReference type="GeneTree" id="ENSGT00940000158727"/>
<dbReference type="HOGENOM" id="CLU_002359_2_1_1"/>
<dbReference type="InParanoid" id="Q0EEE2"/>
<dbReference type="OMA" id="MWHITFF"/>
<dbReference type="OrthoDB" id="6510177at2759"/>
<dbReference type="PhylomeDB" id="Q0EEE2"/>
<dbReference type="TreeFam" id="TF331806"/>
<dbReference type="BioGRID-ORCS" id="74675">
    <property type="hits" value="3 hits in 78 CRISPR screens"/>
</dbReference>
<dbReference type="PRO" id="PR:Q0EEE2"/>
<dbReference type="Proteomes" id="UP000000589">
    <property type="component" value="Chromosome 11"/>
</dbReference>
<dbReference type="RNAct" id="Q0EEE2">
    <property type="molecule type" value="protein"/>
</dbReference>
<dbReference type="Bgee" id="ENSMUSG00000039198">
    <property type="expression patterns" value="Expressed in spermatocyte and 8 other cell types or tissues"/>
</dbReference>
<dbReference type="GO" id="GO:0005783">
    <property type="term" value="C:endoplasmic reticulum"/>
    <property type="evidence" value="ECO:0000250"/>
    <property type="project" value="UniProtKB"/>
</dbReference>
<dbReference type="GO" id="GO:0005789">
    <property type="term" value="C:endoplasmic reticulum membrane"/>
    <property type="evidence" value="ECO:0007669"/>
    <property type="project" value="UniProtKB-SubCell"/>
</dbReference>
<dbReference type="GO" id="GO:0005886">
    <property type="term" value="C:plasma membrane"/>
    <property type="evidence" value="ECO:0007669"/>
    <property type="project" value="UniProtKB-KW"/>
</dbReference>
<dbReference type="GO" id="GO:0097225">
    <property type="term" value="C:sperm midpiece"/>
    <property type="evidence" value="ECO:0000314"/>
    <property type="project" value="MGI"/>
</dbReference>
<dbReference type="FunFam" id="1.20.1640.10:FF:000013">
    <property type="entry name" value="PaTched Related family"/>
    <property type="match status" value="1"/>
</dbReference>
<dbReference type="Gene3D" id="1.20.1640.10">
    <property type="entry name" value="Multidrug efflux transporter AcrB transmembrane domain"/>
    <property type="match status" value="2"/>
</dbReference>
<dbReference type="InterPro" id="IPR051697">
    <property type="entry name" value="Patched_domain-protein"/>
</dbReference>
<dbReference type="InterPro" id="IPR003392">
    <property type="entry name" value="PTHD_SSD"/>
</dbReference>
<dbReference type="InterPro" id="IPR000731">
    <property type="entry name" value="SSD"/>
</dbReference>
<dbReference type="PANTHER" id="PTHR10796:SF60">
    <property type="entry name" value="PATCHED DOMAIN-CONTAINING PROTEIN 3"/>
    <property type="match status" value="1"/>
</dbReference>
<dbReference type="PANTHER" id="PTHR10796">
    <property type="entry name" value="PATCHED-RELATED"/>
    <property type="match status" value="1"/>
</dbReference>
<dbReference type="Pfam" id="PF02460">
    <property type="entry name" value="Patched"/>
    <property type="match status" value="1"/>
</dbReference>
<dbReference type="SUPFAM" id="SSF82866">
    <property type="entry name" value="Multidrug efflux transporter AcrB transmembrane domain"/>
    <property type="match status" value="2"/>
</dbReference>
<dbReference type="PROSITE" id="PS50156">
    <property type="entry name" value="SSD"/>
    <property type="match status" value="1"/>
</dbReference>
<proteinExistence type="evidence at protein level"/>
<evidence type="ECO:0000250" key="1">
    <source>
        <dbReference type="UniProtKB" id="Q3KNS1"/>
    </source>
</evidence>
<evidence type="ECO:0000255" key="2"/>
<evidence type="ECO:0000255" key="3">
    <source>
        <dbReference type="PROSITE-ProRule" id="PRU00199"/>
    </source>
</evidence>
<evidence type="ECO:0000256" key="4">
    <source>
        <dbReference type="SAM" id="MobiDB-lite"/>
    </source>
</evidence>
<evidence type="ECO:0000269" key="5">
    <source>
    </source>
</evidence>
<evidence type="ECO:0000269" key="6">
    <source>
    </source>
</evidence>
<evidence type="ECO:0000303" key="7">
    <source>
    </source>
</evidence>
<evidence type="ECO:0000305" key="8"/>
<organism>
    <name type="scientific">Mus musculus</name>
    <name type="common">Mouse</name>
    <dbReference type="NCBI Taxonomy" id="10090"/>
    <lineage>
        <taxon>Eukaryota</taxon>
        <taxon>Metazoa</taxon>
        <taxon>Chordata</taxon>
        <taxon>Craniata</taxon>
        <taxon>Vertebrata</taxon>
        <taxon>Euteleostomi</taxon>
        <taxon>Mammalia</taxon>
        <taxon>Eutheria</taxon>
        <taxon>Euarchontoglires</taxon>
        <taxon>Glires</taxon>
        <taxon>Rodentia</taxon>
        <taxon>Myomorpha</taxon>
        <taxon>Muroidea</taxon>
        <taxon>Muridae</taxon>
        <taxon>Murinae</taxon>
        <taxon>Mus</taxon>
        <taxon>Mus</taxon>
    </lineage>
</organism>
<name>PTHD3_MOUSE</name>
<feature type="chain" id="PRO_0000309263" description="Patched domain-containing protein 3">
    <location>
        <begin position="1"/>
        <end position="906"/>
    </location>
</feature>
<feature type="transmembrane region" description="Helical" evidence="2">
    <location>
        <begin position="338"/>
        <end position="358"/>
    </location>
</feature>
<feature type="transmembrane region" description="Helical" evidence="2">
    <location>
        <begin position="370"/>
        <end position="390"/>
    </location>
</feature>
<feature type="transmembrane region" description="Helical" evidence="2">
    <location>
        <begin position="392"/>
        <end position="412"/>
    </location>
</feature>
<feature type="transmembrane region" description="Helical" evidence="2">
    <location>
        <begin position="442"/>
        <end position="462"/>
    </location>
</feature>
<feature type="transmembrane region" description="Helical" evidence="2">
    <location>
        <begin position="476"/>
        <end position="496"/>
    </location>
</feature>
<feature type="transmembrane region" description="Helical" evidence="2">
    <location>
        <begin position="559"/>
        <end position="579"/>
    </location>
</feature>
<feature type="transmembrane region" description="Helical" evidence="2">
    <location>
        <begin position="760"/>
        <end position="780"/>
    </location>
</feature>
<feature type="transmembrane region" description="Helical" evidence="2">
    <location>
        <begin position="782"/>
        <end position="802"/>
    </location>
</feature>
<feature type="transmembrane region" description="Helical" evidence="2">
    <location>
        <begin position="814"/>
        <end position="834"/>
    </location>
</feature>
<feature type="transmembrane region" description="Helical" evidence="2">
    <location>
        <begin position="848"/>
        <end position="868"/>
    </location>
</feature>
<feature type="transmembrane region" description="Helical" evidence="2">
    <location>
        <begin position="883"/>
        <end position="903"/>
    </location>
</feature>
<feature type="domain" description="SSD" evidence="3">
    <location>
        <begin position="339"/>
        <end position="496"/>
    </location>
</feature>
<feature type="region of interest" description="Disordered" evidence="4">
    <location>
        <begin position="1"/>
        <end position="70"/>
    </location>
</feature>
<feature type="glycosylation site" description="N-linked (GlcNAc...) asparagine" evidence="2">
    <location>
        <position position="148"/>
    </location>
</feature>
<feature type="glycosylation site" description="N-linked (GlcNAc...) asparagine" evidence="2">
    <location>
        <position position="235"/>
    </location>
</feature>
<feature type="splice variant" id="VSP_029100" description="In isoform 2." evidence="7">
    <original>V</original>
    <variation>E</variation>
    <location>
        <position position="410"/>
    </location>
</feature>
<feature type="splice variant" id="VSP_029101" description="In isoform 2." evidence="7">
    <location>
        <begin position="411"/>
        <end position="906"/>
    </location>
</feature>
<gene>
    <name type="primary">Ptchd3</name>
</gene>
<reference key="1">
    <citation type="submission" date="2005-09" db="EMBL/GenBank/DDBJ databases">
        <title>Identification of the novel RND-type protein in mice.</title>
        <authorList>
            <person name="Hashimoto S."/>
            <person name="Yamaguchi A."/>
        </authorList>
    </citation>
    <scope>NUCLEOTIDE SEQUENCE [MRNA] (ISOFORM 1)</scope>
    <source>
        <tissue>Testis</tissue>
    </source>
</reference>
<reference key="2">
    <citation type="journal article" date="2005" name="Science">
        <title>The transcriptional landscape of the mammalian genome.</title>
        <authorList>
            <person name="Carninci P."/>
            <person name="Kasukawa T."/>
            <person name="Katayama S."/>
            <person name="Gough J."/>
            <person name="Frith M.C."/>
            <person name="Maeda N."/>
            <person name="Oyama R."/>
            <person name="Ravasi T."/>
            <person name="Lenhard B."/>
            <person name="Wells C."/>
            <person name="Kodzius R."/>
            <person name="Shimokawa K."/>
            <person name="Bajic V.B."/>
            <person name="Brenner S.E."/>
            <person name="Batalov S."/>
            <person name="Forrest A.R."/>
            <person name="Zavolan M."/>
            <person name="Davis M.J."/>
            <person name="Wilming L.G."/>
            <person name="Aidinis V."/>
            <person name="Allen J.E."/>
            <person name="Ambesi-Impiombato A."/>
            <person name="Apweiler R."/>
            <person name="Aturaliya R.N."/>
            <person name="Bailey T.L."/>
            <person name="Bansal M."/>
            <person name="Baxter L."/>
            <person name="Beisel K.W."/>
            <person name="Bersano T."/>
            <person name="Bono H."/>
            <person name="Chalk A.M."/>
            <person name="Chiu K.P."/>
            <person name="Choudhary V."/>
            <person name="Christoffels A."/>
            <person name="Clutterbuck D.R."/>
            <person name="Crowe M.L."/>
            <person name="Dalla E."/>
            <person name="Dalrymple B.P."/>
            <person name="de Bono B."/>
            <person name="Della Gatta G."/>
            <person name="di Bernardo D."/>
            <person name="Down T."/>
            <person name="Engstrom P."/>
            <person name="Fagiolini M."/>
            <person name="Faulkner G."/>
            <person name="Fletcher C.F."/>
            <person name="Fukushima T."/>
            <person name="Furuno M."/>
            <person name="Futaki S."/>
            <person name="Gariboldi M."/>
            <person name="Georgii-Hemming P."/>
            <person name="Gingeras T.R."/>
            <person name="Gojobori T."/>
            <person name="Green R.E."/>
            <person name="Gustincich S."/>
            <person name="Harbers M."/>
            <person name="Hayashi Y."/>
            <person name="Hensch T.K."/>
            <person name="Hirokawa N."/>
            <person name="Hill D."/>
            <person name="Huminiecki L."/>
            <person name="Iacono M."/>
            <person name="Ikeo K."/>
            <person name="Iwama A."/>
            <person name="Ishikawa T."/>
            <person name="Jakt M."/>
            <person name="Kanapin A."/>
            <person name="Katoh M."/>
            <person name="Kawasawa Y."/>
            <person name="Kelso J."/>
            <person name="Kitamura H."/>
            <person name="Kitano H."/>
            <person name="Kollias G."/>
            <person name="Krishnan S.P."/>
            <person name="Kruger A."/>
            <person name="Kummerfeld S.K."/>
            <person name="Kurochkin I.V."/>
            <person name="Lareau L.F."/>
            <person name="Lazarevic D."/>
            <person name="Lipovich L."/>
            <person name="Liu J."/>
            <person name="Liuni S."/>
            <person name="McWilliam S."/>
            <person name="Madan Babu M."/>
            <person name="Madera M."/>
            <person name="Marchionni L."/>
            <person name="Matsuda H."/>
            <person name="Matsuzawa S."/>
            <person name="Miki H."/>
            <person name="Mignone F."/>
            <person name="Miyake S."/>
            <person name="Morris K."/>
            <person name="Mottagui-Tabar S."/>
            <person name="Mulder N."/>
            <person name="Nakano N."/>
            <person name="Nakauchi H."/>
            <person name="Ng P."/>
            <person name="Nilsson R."/>
            <person name="Nishiguchi S."/>
            <person name="Nishikawa S."/>
            <person name="Nori F."/>
            <person name="Ohara O."/>
            <person name="Okazaki Y."/>
            <person name="Orlando V."/>
            <person name="Pang K.C."/>
            <person name="Pavan W.J."/>
            <person name="Pavesi G."/>
            <person name="Pesole G."/>
            <person name="Petrovsky N."/>
            <person name="Piazza S."/>
            <person name="Reed J."/>
            <person name="Reid J.F."/>
            <person name="Ring B.Z."/>
            <person name="Ringwald M."/>
            <person name="Rost B."/>
            <person name="Ruan Y."/>
            <person name="Salzberg S.L."/>
            <person name="Sandelin A."/>
            <person name="Schneider C."/>
            <person name="Schoenbach C."/>
            <person name="Sekiguchi K."/>
            <person name="Semple C.A."/>
            <person name="Seno S."/>
            <person name="Sessa L."/>
            <person name="Sheng Y."/>
            <person name="Shibata Y."/>
            <person name="Shimada H."/>
            <person name="Shimada K."/>
            <person name="Silva D."/>
            <person name="Sinclair B."/>
            <person name="Sperling S."/>
            <person name="Stupka E."/>
            <person name="Sugiura K."/>
            <person name="Sultana R."/>
            <person name="Takenaka Y."/>
            <person name="Taki K."/>
            <person name="Tammoja K."/>
            <person name="Tan S.L."/>
            <person name="Tang S."/>
            <person name="Taylor M.S."/>
            <person name="Tegner J."/>
            <person name="Teichmann S.A."/>
            <person name="Ueda H.R."/>
            <person name="van Nimwegen E."/>
            <person name="Verardo R."/>
            <person name="Wei C.L."/>
            <person name="Yagi K."/>
            <person name="Yamanishi H."/>
            <person name="Zabarovsky E."/>
            <person name="Zhu S."/>
            <person name="Zimmer A."/>
            <person name="Hide W."/>
            <person name="Bult C."/>
            <person name="Grimmond S.M."/>
            <person name="Teasdale R.D."/>
            <person name="Liu E.T."/>
            <person name="Brusic V."/>
            <person name="Quackenbush J."/>
            <person name="Wahlestedt C."/>
            <person name="Mattick J.S."/>
            <person name="Hume D.A."/>
            <person name="Kai C."/>
            <person name="Sasaki D."/>
            <person name="Tomaru Y."/>
            <person name="Fukuda S."/>
            <person name="Kanamori-Katayama M."/>
            <person name="Suzuki M."/>
            <person name="Aoki J."/>
            <person name="Arakawa T."/>
            <person name="Iida J."/>
            <person name="Imamura K."/>
            <person name="Itoh M."/>
            <person name="Kato T."/>
            <person name="Kawaji H."/>
            <person name="Kawagashira N."/>
            <person name="Kawashima T."/>
            <person name="Kojima M."/>
            <person name="Kondo S."/>
            <person name="Konno H."/>
            <person name="Nakano K."/>
            <person name="Ninomiya N."/>
            <person name="Nishio T."/>
            <person name="Okada M."/>
            <person name="Plessy C."/>
            <person name="Shibata K."/>
            <person name="Shiraki T."/>
            <person name="Suzuki S."/>
            <person name="Tagami M."/>
            <person name="Waki K."/>
            <person name="Watahiki A."/>
            <person name="Okamura-Oho Y."/>
            <person name="Suzuki H."/>
            <person name="Kawai J."/>
            <person name="Hayashizaki Y."/>
        </authorList>
    </citation>
    <scope>NUCLEOTIDE SEQUENCE [LARGE SCALE MRNA] (ISOFORM 2)</scope>
    <scope>NUCLEOTIDE SEQUENCE [LARGE SCALE MRNA] OF 1-729 (ISOFORM 1)</scope>
    <source>
        <strain>C57BL/6J</strain>
        <tissue>Testis</tissue>
    </source>
</reference>
<reference key="3">
    <citation type="journal article" date="2009" name="PLoS Biol.">
        <title>Lineage-specific biology revealed by a finished genome assembly of the mouse.</title>
        <authorList>
            <person name="Church D.M."/>
            <person name="Goodstadt L."/>
            <person name="Hillier L.W."/>
            <person name="Zody M.C."/>
            <person name="Goldstein S."/>
            <person name="She X."/>
            <person name="Bult C.J."/>
            <person name="Agarwala R."/>
            <person name="Cherry J.L."/>
            <person name="DiCuccio M."/>
            <person name="Hlavina W."/>
            <person name="Kapustin Y."/>
            <person name="Meric P."/>
            <person name="Maglott D."/>
            <person name="Birtle Z."/>
            <person name="Marques A.C."/>
            <person name="Graves T."/>
            <person name="Zhou S."/>
            <person name="Teague B."/>
            <person name="Potamousis K."/>
            <person name="Churas C."/>
            <person name="Place M."/>
            <person name="Herschleb J."/>
            <person name="Runnheim R."/>
            <person name="Forrest D."/>
            <person name="Amos-Landgraf J."/>
            <person name="Schwartz D.C."/>
            <person name="Cheng Z."/>
            <person name="Lindblad-Toh K."/>
            <person name="Eichler E.E."/>
            <person name="Ponting C.P."/>
        </authorList>
    </citation>
    <scope>NUCLEOTIDE SEQUENCE [LARGE SCALE GENOMIC DNA]</scope>
    <source>
        <strain>C57BL/6J</strain>
    </source>
</reference>
<reference key="4">
    <citation type="journal article" date="2007" name="Biochem. Biophys. Res. Commun.">
        <title>Male germ cell-specific expression of a novel patched-domain containing gene Ptchd3.</title>
        <authorList>
            <person name="Fan J."/>
            <person name="Akabane H."/>
            <person name="Zheng X."/>
            <person name="Zhou X."/>
            <person name="Zhang L."/>
            <person name="Liu Q."/>
            <person name="Zhang Y.-L."/>
            <person name="Yang J."/>
            <person name="Zhu G.-Z."/>
        </authorList>
    </citation>
    <scope>FUNCTION</scope>
    <scope>SUBCELLULAR LOCATION</scope>
    <scope>TISSUE SPECIFICITY</scope>
    <scope>DEVELOPMENTAL STAGE</scope>
</reference>
<reference key="5">
    <citation type="journal article" date="2020" name="Gene">
        <title>Mouse Ptchd3 is a non-essential gene.</title>
        <authorList>
            <person name="Gonzalez Morales S.R."/>
            <person name="Liu C."/>
            <person name="Blankenship H."/>
            <person name="Zhu G.Z."/>
        </authorList>
    </citation>
    <scope>FUNCTION</scope>
</reference>
<accession>Q0EEE2</accession>
<accession>A2AC39</accession>
<accession>Q9CUM1</accession>
<accession>Q9D3R2</accession>
<protein>
    <recommendedName>
        <fullName>Patched domain-containing protein 3</fullName>
    </recommendedName>
    <alternativeName>
        <fullName>RND-type protein RNDEu-3</fullName>
    </alternativeName>
</protein>